<gene>
    <name evidence="1" type="primary">grpE</name>
    <name type="ordered locus">FN0114</name>
</gene>
<accession>Q8RH07</accession>
<evidence type="ECO:0000255" key="1">
    <source>
        <dbReference type="HAMAP-Rule" id="MF_01151"/>
    </source>
</evidence>
<organism>
    <name type="scientific">Fusobacterium nucleatum subsp. nucleatum (strain ATCC 25586 / DSM 15643 / BCRC 10681 / CIP 101130 / JCM 8532 / KCTC 2640 / LMG 13131 / VPI 4355)</name>
    <dbReference type="NCBI Taxonomy" id="190304"/>
    <lineage>
        <taxon>Bacteria</taxon>
        <taxon>Fusobacteriati</taxon>
        <taxon>Fusobacteriota</taxon>
        <taxon>Fusobacteriia</taxon>
        <taxon>Fusobacteriales</taxon>
        <taxon>Fusobacteriaceae</taxon>
        <taxon>Fusobacterium</taxon>
    </lineage>
</organism>
<proteinExistence type="inferred from homology"/>
<reference key="1">
    <citation type="journal article" date="2002" name="J. Bacteriol.">
        <title>Genome sequence and analysis of the oral bacterium Fusobacterium nucleatum strain ATCC 25586.</title>
        <authorList>
            <person name="Kapatral V."/>
            <person name="Anderson I."/>
            <person name="Ivanova N."/>
            <person name="Reznik G."/>
            <person name="Los T."/>
            <person name="Lykidis A."/>
            <person name="Bhattacharyya A."/>
            <person name="Bartman A."/>
            <person name="Gardner W."/>
            <person name="Grechkin G."/>
            <person name="Zhu L."/>
            <person name="Vasieva O."/>
            <person name="Chu L."/>
            <person name="Kogan Y."/>
            <person name="Chaga O."/>
            <person name="Goltsman E."/>
            <person name="Bernal A."/>
            <person name="Larsen N."/>
            <person name="D'Souza M."/>
            <person name="Walunas T."/>
            <person name="Pusch G."/>
            <person name="Haselkorn R."/>
            <person name="Fonstein M."/>
            <person name="Kyrpides N.C."/>
            <person name="Overbeek R."/>
        </authorList>
    </citation>
    <scope>NUCLEOTIDE SEQUENCE [LARGE SCALE GENOMIC DNA]</scope>
    <source>
        <strain>ATCC 25586 / DSM 15643 / BCRC 10681 / CIP 101130 / JCM 8532 / KCTC 2640 / LMG 13131 / VPI 4355</strain>
    </source>
</reference>
<sequence>MKDKEIKEEVLKEEINKEVNEKKKCECEEGKEEAHEHKNDEHACCGKHNHKEEIEKLKAEIEEWKNSFLRKQADFQNFTKRKEKEVDELKKFASEKIITQFLGSLDNFERAIESSSESKDFDSLLQGVEMIVRNLKDIMSSEDVEEIPTEGAFNPEYHHAVGVETSEDKKEDEIVKVLQKGYMMKGKVIRPAMVIVCKK</sequence>
<keyword id="KW-0143">Chaperone</keyword>
<keyword id="KW-0963">Cytoplasm</keyword>
<keyword id="KW-1185">Reference proteome</keyword>
<keyword id="KW-0346">Stress response</keyword>
<name>GRPE_FUSNN</name>
<protein>
    <recommendedName>
        <fullName evidence="1">Protein GrpE</fullName>
    </recommendedName>
    <alternativeName>
        <fullName evidence="1">HSP-70 cofactor</fullName>
    </alternativeName>
</protein>
<feature type="chain" id="PRO_0000113788" description="Protein GrpE">
    <location>
        <begin position="1"/>
        <end position="199"/>
    </location>
</feature>
<comment type="function">
    <text evidence="1">Participates actively in the response to hyperosmotic and heat shock by preventing the aggregation of stress-denatured proteins, in association with DnaK and GrpE. It is the nucleotide exchange factor for DnaK and may function as a thermosensor. Unfolded proteins bind initially to DnaJ; upon interaction with the DnaJ-bound protein, DnaK hydrolyzes its bound ATP, resulting in the formation of a stable complex. GrpE releases ADP from DnaK; ATP binding to DnaK triggers the release of the substrate protein, thus completing the reaction cycle. Several rounds of ATP-dependent interactions between DnaJ, DnaK and GrpE are required for fully efficient folding.</text>
</comment>
<comment type="subunit">
    <text evidence="1">Homodimer.</text>
</comment>
<comment type="subcellular location">
    <subcellularLocation>
        <location evidence="1">Cytoplasm</location>
    </subcellularLocation>
</comment>
<comment type="similarity">
    <text evidence="1">Belongs to the GrpE family.</text>
</comment>
<dbReference type="EMBL" id="AE009951">
    <property type="protein sequence ID" value="AAL94323.1"/>
    <property type="molecule type" value="Genomic_DNA"/>
</dbReference>
<dbReference type="RefSeq" id="NP_603024.1">
    <property type="nucleotide sequence ID" value="NC_003454.1"/>
</dbReference>
<dbReference type="RefSeq" id="WP_011016151.1">
    <property type="nucleotide sequence ID" value="NZ_CP028101.1"/>
</dbReference>
<dbReference type="SMR" id="Q8RH07"/>
<dbReference type="FunCoup" id="Q8RH07">
    <property type="interactions" value="348"/>
</dbReference>
<dbReference type="STRING" id="190304.FN0114"/>
<dbReference type="PaxDb" id="190304-FN0114"/>
<dbReference type="EnsemblBacteria" id="AAL94323">
    <property type="protein sequence ID" value="AAL94323"/>
    <property type="gene ID" value="FN0114"/>
</dbReference>
<dbReference type="GeneID" id="79782758"/>
<dbReference type="KEGG" id="fnu:FN0114"/>
<dbReference type="PATRIC" id="fig|190304.8.peg.701"/>
<dbReference type="eggNOG" id="COG0576">
    <property type="taxonomic scope" value="Bacteria"/>
</dbReference>
<dbReference type="HOGENOM" id="CLU_057217_6_3_0"/>
<dbReference type="InParanoid" id="Q8RH07"/>
<dbReference type="BioCyc" id="FNUC190304:G1FZS-725-MONOMER"/>
<dbReference type="Proteomes" id="UP000002521">
    <property type="component" value="Chromosome"/>
</dbReference>
<dbReference type="GO" id="GO:0005737">
    <property type="term" value="C:cytoplasm"/>
    <property type="evidence" value="ECO:0007669"/>
    <property type="project" value="UniProtKB-SubCell"/>
</dbReference>
<dbReference type="GO" id="GO:0000774">
    <property type="term" value="F:adenyl-nucleotide exchange factor activity"/>
    <property type="evidence" value="ECO:0000318"/>
    <property type="project" value="GO_Central"/>
</dbReference>
<dbReference type="GO" id="GO:0042803">
    <property type="term" value="F:protein homodimerization activity"/>
    <property type="evidence" value="ECO:0007669"/>
    <property type="project" value="InterPro"/>
</dbReference>
<dbReference type="GO" id="GO:0051087">
    <property type="term" value="F:protein-folding chaperone binding"/>
    <property type="evidence" value="ECO:0007669"/>
    <property type="project" value="InterPro"/>
</dbReference>
<dbReference type="GO" id="GO:0051082">
    <property type="term" value="F:unfolded protein binding"/>
    <property type="evidence" value="ECO:0000318"/>
    <property type="project" value="GO_Central"/>
</dbReference>
<dbReference type="GO" id="GO:0006457">
    <property type="term" value="P:protein folding"/>
    <property type="evidence" value="ECO:0007669"/>
    <property type="project" value="InterPro"/>
</dbReference>
<dbReference type="CDD" id="cd00446">
    <property type="entry name" value="GrpE"/>
    <property type="match status" value="1"/>
</dbReference>
<dbReference type="FunFam" id="2.30.22.10:FF:000001">
    <property type="entry name" value="Protein GrpE"/>
    <property type="match status" value="1"/>
</dbReference>
<dbReference type="Gene3D" id="3.90.20.20">
    <property type="match status" value="1"/>
</dbReference>
<dbReference type="Gene3D" id="2.30.22.10">
    <property type="entry name" value="Head domain of nucleotide exchange factor GrpE"/>
    <property type="match status" value="1"/>
</dbReference>
<dbReference type="HAMAP" id="MF_01151">
    <property type="entry name" value="GrpE"/>
    <property type="match status" value="1"/>
</dbReference>
<dbReference type="InterPro" id="IPR000740">
    <property type="entry name" value="GrpE"/>
</dbReference>
<dbReference type="InterPro" id="IPR013805">
    <property type="entry name" value="GrpE_coiled_coil"/>
</dbReference>
<dbReference type="InterPro" id="IPR009012">
    <property type="entry name" value="GrpE_head"/>
</dbReference>
<dbReference type="NCBIfam" id="NF010738">
    <property type="entry name" value="PRK14140.1"/>
    <property type="match status" value="1"/>
</dbReference>
<dbReference type="PANTHER" id="PTHR21237">
    <property type="entry name" value="GRPE PROTEIN"/>
    <property type="match status" value="1"/>
</dbReference>
<dbReference type="PANTHER" id="PTHR21237:SF23">
    <property type="entry name" value="GRPE PROTEIN HOMOLOG, MITOCHONDRIAL"/>
    <property type="match status" value="1"/>
</dbReference>
<dbReference type="Pfam" id="PF01025">
    <property type="entry name" value="GrpE"/>
    <property type="match status" value="1"/>
</dbReference>
<dbReference type="PRINTS" id="PR00773">
    <property type="entry name" value="GRPEPROTEIN"/>
</dbReference>
<dbReference type="SUPFAM" id="SSF58014">
    <property type="entry name" value="Coiled-coil domain of nucleotide exchange factor GrpE"/>
    <property type="match status" value="1"/>
</dbReference>
<dbReference type="SUPFAM" id="SSF51064">
    <property type="entry name" value="Head domain of nucleotide exchange factor GrpE"/>
    <property type="match status" value="1"/>
</dbReference>
<dbReference type="PROSITE" id="PS01071">
    <property type="entry name" value="GRPE"/>
    <property type="match status" value="1"/>
</dbReference>